<evidence type="ECO:0000255" key="1">
    <source>
        <dbReference type="HAMAP-Rule" id="MF_01523"/>
    </source>
</evidence>
<comment type="function">
    <text evidence="1">Specifically methylates the guanosine in position 1516 of 16S rRNA.</text>
</comment>
<comment type="catalytic activity">
    <reaction evidence="1">
        <text>guanosine(1516) in 16S rRNA + S-adenosyl-L-methionine = N(2)-methylguanosine(1516) in 16S rRNA + S-adenosyl-L-homocysteine + H(+)</text>
        <dbReference type="Rhea" id="RHEA:43220"/>
        <dbReference type="Rhea" id="RHEA-COMP:10412"/>
        <dbReference type="Rhea" id="RHEA-COMP:10413"/>
        <dbReference type="ChEBI" id="CHEBI:15378"/>
        <dbReference type="ChEBI" id="CHEBI:57856"/>
        <dbReference type="ChEBI" id="CHEBI:59789"/>
        <dbReference type="ChEBI" id="CHEBI:74269"/>
        <dbReference type="ChEBI" id="CHEBI:74481"/>
        <dbReference type="EC" id="2.1.1.242"/>
    </reaction>
</comment>
<comment type="subcellular location">
    <subcellularLocation>
        <location evidence="1">Cytoplasm</location>
    </subcellularLocation>
</comment>
<comment type="similarity">
    <text evidence="1">Belongs to the methyltransferase superfamily. RsmJ family.</text>
</comment>
<accession>A4WFT5</accession>
<sequence length="254" mass="27348">MKICLVDETGAGDGALSVLAARWGLEHDEQNLMALVMTPEHLELRKRDEPKLGGIFVDFADGAMAHRRKFGGGRGEAVAKAVGVKGSYLPDVVDATAGLGRDAFVLASVGCRVRMLERNPVVAALLDDGLARGYADPEIGAWLQERLQLIHASSLTALTDITPRPQVVYLDPMFPHKQKSALVKKEMRVFQSLVGPDLDADGLLEPARLLATKRVVVKRPDYAPPLADVATTNAVTTKGHRFDIYSGTAEVSAV</sequence>
<dbReference type="EC" id="2.1.1.242" evidence="1"/>
<dbReference type="EMBL" id="CP000653">
    <property type="protein sequence ID" value="ABP62565.1"/>
    <property type="molecule type" value="Genomic_DNA"/>
</dbReference>
<dbReference type="RefSeq" id="WP_015960870.1">
    <property type="nucleotide sequence ID" value="NC_009436.1"/>
</dbReference>
<dbReference type="SMR" id="A4WFT5"/>
<dbReference type="STRING" id="399742.Ent638_3910"/>
<dbReference type="KEGG" id="ent:Ent638_3910"/>
<dbReference type="eggNOG" id="COG0742">
    <property type="taxonomic scope" value="Bacteria"/>
</dbReference>
<dbReference type="HOGENOM" id="CLU_076324_0_0_6"/>
<dbReference type="OrthoDB" id="3191794at2"/>
<dbReference type="Proteomes" id="UP000000230">
    <property type="component" value="Chromosome"/>
</dbReference>
<dbReference type="GO" id="GO:0005737">
    <property type="term" value="C:cytoplasm"/>
    <property type="evidence" value="ECO:0007669"/>
    <property type="project" value="UniProtKB-SubCell"/>
</dbReference>
<dbReference type="GO" id="GO:0008990">
    <property type="term" value="F:rRNA (guanine-N2-)-methyltransferase activity"/>
    <property type="evidence" value="ECO:0007669"/>
    <property type="project" value="UniProtKB-UniRule"/>
</dbReference>
<dbReference type="CDD" id="cd02440">
    <property type="entry name" value="AdoMet_MTases"/>
    <property type="match status" value="1"/>
</dbReference>
<dbReference type="FunFam" id="3.40.50.150:FF:000072">
    <property type="entry name" value="Ribosomal RNA small subunit methyltransferase J"/>
    <property type="match status" value="1"/>
</dbReference>
<dbReference type="Gene3D" id="3.40.50.150">
    <property type="entry name" value="Vaccinia Virus protein VP39"/>
    <property type="match status" value="1"/>
</dbReference>
<dbReference type="Gene3D" id="3.40.1630.10">
    <property type="entry name" value="YhiQ-like domain"/>
    <property type="match status" value="1"/>
</dbReference>
<dbReference type="HAMAP" id="MF_01523">
    <property type="entry name" value="16SrRNA_methyltr_J"/>
    <property type="match status" value="1"/>
</dbReference>
<dbReference type="InterPro" id="IPR007536">
    <property type="entry name" value="16SrRNA_methylTrfase_J"/>
</dbReference>
<dbReference type="InterPro" id="IPR029063">
    <property type="entry name" value="SAM-dependent_MTases_sf"/>
</dbReference>
<dbReference type="NCBIfam" id="NF008012">
    <property type="entry name" value="PRK10742.1"/>
    <property type="match status" value="1"/>
</dbReference>
<dbReference type="PANTHER" id="PTHR36112">
    <property type="entry name" value="RIBOSOMAL RNA SMALL SUBUNIT METHYLTRANSFERASE J"/>
    <property type="match status" value="1"/>
</dbReference>
<dbReference type="PANTHER" id="PTHR36112:SF1">
    <property type="entry name" value="RIBOSOMAL RNA SMALL SUBUNIT METHYLTRANSFERASE J"/>
    <property type="match status" value="1"/>
</dbReference>
<dbReference type="Pfam" id="PF04445">
    <property type="entry name" value="SAM_MT"/>
    <property type="match status" value="1"/>
</dbReference>
<dbReference type="SUPFAM" id="SSF53335">
    <property type="entry name" value="S-adenosyl-L-methionine-dependent methyltransferases"/>
    <property type="match status" value="1"/>
</dbReference>
<gene>
    <name evidence="1" type="primary">rsmJ</name>
    <name type="ordered locus">Ent638_3910</name>
</gene>
<feature type="chain" id="PRO_0000316252" description="Ribosomal RNA small subunit methyltransferase J">
    <location>
        <begin position="1"/>
        <end position="254"/>
    </location>
</feature>
<feature type="binding site" evidence="1">
    <location>
        <begin position="101"/>
        <end position="102"/>
    </location>
    <ligand>
        <name>S-adenosyl-L-methionine</name>
        <dbReference type="ChEBI" id="CHEBI:59789"/>
    </ligand>
</feature>
<feature type="binding site" evidence="1">
    <location>
        <begin position="117"/>
        <end position="118"/>
    </location>
    <ligand>
        <name>S-adenosyl-L-methionine</name>
        <dbReference type="ChEBI" id="CHEBI:59789"/>
    </ligand>
</feature>
<feature type="binding site" evidence="1">
    <location>
        <begin position="153"/>
        <end position="154"/>
    </location>
    <ligand>
        <name>S-adenosyl-L-methionine</name>
        <dbReference type="ChEBI" id="CHEBI:59789"/>
    </ligand>
</feature>
<feature type="binding site" evidence="1">
    <location>
        <position position="171"/>
    </location>
    <ligand>
        <name>S-adenosyl-L-methionine</name>
        <dbReference type="ChEBI" id="CHEBI:59789"/>
    </ligand>
</feature>
<protein>
    <recommendedName>
        <fullName evidence="1">Ribosomal RNA small subunit methyltransferase J</fullName>
        <ecNumber evidence="1">2.1.1.242</ecNumber>
    </recommendedName>
    <alternativeName>
        <fullName evidence="1">16S rRNA m2G1516 methyltransferase</fullName>
    </alternativeName>
    <alternativeName>
        <fullName evidence="1">rRNA (guanine-N(2)-)-methyltransferase</fullName>
    </alternativeName>
</protein>
<organism>
    <name type="scientific">Enterobacter sp. (strain 638)</name>
    <dbReference type="NCBI Taxonomy" id="399742"/>
    <lineage>
        <taxon>Bacteria</taxon>
        <taxon>Pseudomonadati</taxon>
        <taxon>Pseudomonadota</taxon>
        <taxon>Gammaproteobacteria</taxon>
        <taxon>Enterobacterales</taxon>
        <taxon>Enterobacteriaceae</taxon>
        <taxon>Enterobacter</taxon>
    </lineage>
</organism>
<name>RSMJ_ENT38</name>
<proteinExistence type="inferred from homology"/>
<reference key="1">
    <citation type="journal article" date="2010" name="PLoS Genet.">
        <title>Genome sequence of the plant growth promoting endophytic bacterium Enterobacter sp. 638.</title>
        <authorList>
            <person name="Taghavi S."/>
            <person name="van der Lelie D."/>
            <person name="Hoffman A."/>
            <person name="Zhang Y.B."/>
            <person name="Walla M.D."/>
            <person name="Vangronsveld J."/>
            <person name="Newman L."/>
            <person name="Monchy S."/>
        </authorList>
    </citation>
    <scope>NUCLEOTIDE SEQUENCE [LARGE SCALE GENOMIC DNA]</scope>
    <source>
        <strain>638</strain>
    </source>
</reference>
<keyword id="KW-0963">Cytoplasm</keyword>
<keyword id="KW-0489">Methyltransferase</keyword>
<keyword id="KW-0698">rRNA processing</keyword>
<keyword id="KW-0949">S-adenosyl-L-methionine</keyword>
<keyword id="KW-0808">Transferase</keyword>